<accession>Q47MV4</accession>
<dbReference type="EMBL" id="CP000088">
    <property type="protein sequence ID" value="AAZ56215.1"/>
    <property type="status" value="ALT_INIT"/>
    <property type="molecule type" value="Genomic_DNA"/>
</dbReference>
<dbReference type="RefSeq" id="WP_011292605.1">
    <property type="nucleotide sequence ID" value="NC_007333.1"/>
</dbReference>
<dbReference type="SMR" id="Q47MV4"/>
<dbReference type="STRING" id="269800.Tfu_2182"/>
<dbReference type="KEGG" id="tfu:Tfu_2182"/>
<dbReference type="eggNOG" id="COG0261">
    <property type="taxonomic scope" value="Bacteria"/>
</dbReference>
<dbReference type="HOGENOM" id="CLU_061463_3_0_11"/>
<dbReference type="OrthoDB" id="9813334at2"/>
<dbReference type="GO" id="GO:0005737">
    <property type="term" value="C:cytoplasm"/>
    <property type="evidence" value="ECO:0007669"/>
    <property type="project" value="UniProtKB-ARBA"/>
</dbReference>
<dbReference type="GO" id="GO:1990904">
    <property type="term" value="C:ribonucleoprotein complex"/>
    <property type="evidence" value="ECO:0007669"/>
    <property type="project" value="UniProtKB-KW"/>
</dbReference>
<dbReference type="GO" id="GO:0005840">
    <property type="term" value="C:ribosome"/>
    <property type="evidence" value="ECO:0007669"/>
    <property type="project" value="UniProtKB-KW"/>
</dbReference>
<dbReference type="GO" id="GO:0019843">
    <property type="term" value="F:rRNA binding"/>
    <property type="evidence" value="ECO:0007669"/>
    <property type="project" value="UniProtKB-UniRule"/>
</dbReference>
<dbReference type="GO" id="GO:0003735">
    <property type="term" value="F:structural constituent of ribosome"/>
    <property type="evidence" value="ECO:0007669"/>
    <property type="project" value="InterPro"/>
</dbReference>
<dbReference type="GO" id="GO:0006412">
    <property type="term" value="P:translation"/>
    <property type="evidence" value="ECO:0007669"/>
    <property type="project" value="UniProtKB-UniRule"/>
</dbReference>
<dbReference type="HAMAP" id="MF_01363">
    <property type="entry name" value="Ribosomal_bL21"/>
    <property type="match status" value="1"/>
</dbReference>
<dbReference type="InterPro" id="IPR028909">
    <property type="entry name" value="bL21-like"/>
</dbReference>
<dbReference type="InterPro" id="IPR036164">
    <property type="entry name" value="bL21-like_sf"/>
</dbReference>
<dbReference type="InterPro" id="IPR001787">
    <property type="entry name" value="Ribosomal_bL21"/>
</dbReference>
<dbReference type="InterPro" id="IPR018258">
    <property type="entry name" value="Ribosomal_bL21_CS"/>
</dbReference>
<dbReference type="NCBIfam" id="TIGR00061">
    <property type="entry name" value="L21"/>
    <property type="match status" value="1"/>
</dbReference>
<dbReference type="PANTHER" id="PTHR21349">
    <property type="entry name" value="50S RIBOSOMAL PROTEIN L21"/>
    <property type="match status" value="1"/>
</dbReference>
<dbReference type="PANTHER" id="PTHR21349:SF0">
    <property type="entry name" value="LARGE RIBOSOMAL SUBUNIT PROTEIN BL21M"/>
    <property type="match status" value="1"/>
</dbReference>
<dbReference type="Pfam" id="PF00829">
    <property type="entry name" value="Ribosomal_L21p"/>
    <property type="match status" value="1"/>
</dbReference>
<dbReference type="SUPFAM" id="SSF141091">
    <property type="entry name" value="L21p-like"/>
    <property type="match status" value="1"/>
</dbReference>
<dbReference type="PROSITE" id="PS01169">
    <property type="entry name" value="RIBOSOMAL_L21"/>
    <property type="match status" value="1"/>
</dbReference>
<name>RL21_THEFY</name>
<evidence type="ECO:0000255" key="1">
    <source>
        <dbReference type="HAMAP-Rule" id="MF_01363"/>
    </source>
</evidence>
<evidence type="ECO:0000305" key="2"/>
<protein>
    <recommendedName>
        <fullName evidence="1">Large ribosomal subunit protein bL21</fullName>
    </recommendedName>
    <alternativeName>
        <fullName evidence="2">50S ribosomal protein L21</fullName>
    </alternativeName>
</protein>
<keyword id="KW-0687">Ribonucleoprotein</keyword>
<keyword id="KW-0689">Ribosomal protein</keyword>
<keyword id="KW-0694">RNA-binding</keyword>
<keyword id="KW-0699">rRNA-binding</keyword>
<organism>
    <name type="scientific">Thermobifida fusca (strain YX)</name>
    <dbReference type="NCBI Taxonomy" id="269800"/>
    <lineage>
        <taxon>Bacteria</taxon>
        <taxon>Bacillati</taxon>
        <taxon>Actinomycetota</taxon>
        <taxon>Actinomycetes</taxon>
        <taxon>Streptosporangiales</taxon>
        <taxon>Nocardiopsidaceae</taxon>
        <taxon>Thermobifida</taxon>
    </lineage>
</organism>
<gene>
    <name evidence="1" type="primary">rplU</name>
    <name type="ordered locus">Tfu_2182</name>
</gene>
<proteinExistence type="inferred from homology"/>
<reference key="1">
    <citation type="journal article" date="2007" name="J. Bacteriol.">
        <title>Genome sequence and analysis of the soil cellulolytic actinomycete Thermobifida fusca YX.</title>
        <authorList>
            <person name="Lykidis A."/>
            <person name="Mavromatis K."/>
            <person name="Ivanova N."/>
            <person name="Anderson I."/>
            <person name="Land M."/>
            <person name="DiBartolo G."/>
            <person name="Martinez M."/>
            <person name="Lapidus A."/>
            <person name="Lucas S."/>
            <person name="Copeland A."/>
            <person name="Richardson P."/>
            <person name="Wilson D.B."/>
            <person name="Kyrpides N."/>
        </authorList>
    </citation>
    <scope>NUCLEOTIDE SEQUENCE [LARGE SCALE GENOMIC DNA]</scope>
    <source>
        <strain>YX</strain>
    </source>
</reference>
<sequence>MYAIVRAGGRQEKVSVDDVVTIDRVAKEAGDTLNLEPLLVVDNGKVVSDAAELNKYQVTAEVLGEVTGPKIKILKYKSKTGYKRRLGHRQKYTQIRVTGIAAK</sequence>
<feature type="chain" id="PRO_0000270740" description="Large ribosomal subunit protein bL21">
    <location>
        <begin position="1"/>
        <end position="103"/>
    </location>
</feature>
<comment type="function">
    <text evidence="1">This protein binds to 23S rRNA in the presence of protein L20.</text>
</comment>
<comment type="subunit">
    <text evidence="1">Part of the 50S ribosomal subunit. Contacts protein L20.</text>
</comment>
<comment type="similarity">
    <text evidence="1">Belongs to the bacterial ribosomal protein bL21 family.</text>
</comment>
<comment type="sequence caution" evidence="2">
    <conflict type="erroneous initiation">
        <sequence resource="EMBL-CDS" id="AAZ56215"/>
    </conflict>
</comment>